<evidence type="ECO:0000305" key="1"/>
<keyword id="KW-0535">Nitrogen fixation</keyword>
<sequence length="477" mass="51180">MSEALKSKIADVLNEPGCATNSTKTDVLRKRGCAERLTPGAAAGGCAFDGAMTALQPIVDVAHLVHAPAACWSNGWDNRSSASSGSELYRKGFTTDLSELDIVMGHGEKKLYRALRPVIEAESPAAVFVYATCVTALIGDDLGAVCGAATAKWGAPCVPVGVPGFAGSKNLGNKLGGEALLDRVVGALEPETVTPCDVNIIGDYGLSGELWQVKPLLDKLGIRILGSIAGDARYKQVAMAHRAKVTMLVCSQALINVARKMQERYGIPYFEGSFYGISDTSQSLRRICELLVDQGAPKDLLNRCEVLVAREEAKAWAALKPFRPRVAGRRVLLYTGGHKSWSVASALQELGMEVVGTSMRKVTANDRDRVIEIMGDDKHMCENMAPREMYQECCARRADVLLSGGRSQFVALKALVPSVDVNQEKHEPYAGYMGMVDLVRAIDRSVNNPMWADLRAPAPWDASLTGSVVSVPSGPAR</sequence>
<protein>
    <recommendedName>
        <fullName>Nitrogenase iron-molybdenum cofactor biosynthesis protein NifE</fullName>
    </recommendedName>
</protein>
<reference key="1">
    <citation type="journal article" date="1989" name="Mol. Gen. Genet.">
        <title>DNA sequence and genetic analysis of the Rhodobacter capsulatus nifENX gene region: homology between NifX and NifB suggests involvement of NifX in processing of the iron-molybdenum cofactor.</title>
        <authorList>
            <person name="Moreno-Vivian C."/>
            <person name="Schmehl M."/>
            <person name="Masepohl B."/>
            <person name="Arnold W."/>
            <person name="Klipp W."/>
        </authorList>
    </citation>
    <scope>NUCLEOTIDE SEQUENCE [GENOMIC DNA]</scope>
</reference>
<comment type="function">
    <text>This protein may play a role in the biosynthesis of the prosthetic group of nitrogenase (FeMo cofactor).</text>
</comment>
<comment type="pathway">
    <text>Cofactor biosynthesis; Fe-Mo cofactor biosynthesis.</text>
</comment>
<comment type="similarity">
    <text evidence="1">Belongs to the NifD/NifK/NifE/NifN family.</text>
</comment>
<name>NIFE_RHOCA</name>
<feature type="chain" id="PRO_0000153123" description="Nitrogenase iron-molybdenum cofactor biosynthesis protein NifE">
    <location>
        <begin position="1"/>
        <end position="477"/>
    </location>
</feature>
<organism>
    <name type="scientific">Rhodobacter capsulatus</name>
    <name type="common">Rhodopseudomonas capsulata</name>
    <dbReference type="NCBI Taxonomy" id="1061"/>
    <lineage>
        <taxon>Bacteria</taxon>
        <taxon>Pseudomonadati</taxon>
        <taxon>Pseudomonadota</taxon>
        <taxon>Alphaproteobacteria</taxon>
        <taxon>Rhodobacterales</taxon>
        <taxon>Rhodobacter group</taxon>
        <taxon>Rhodobacter</taxon>
    </lineage>
</organism>
<accession>P19055</accession>
<proteinExistence type="inferred from homology"/>
<gene>
    <name type="primary">nifE</name>
</gene>
<dbReference type="EMBL" id="X17433">
    <property type="protein sequence ID" value="CAA35472.1"/>
    <property type="molecule type" value="Genomic_DNA"/>
</dbReference>
<dbReference type="PIR" id="JE0029">
    <property type="entry name" value="JE0029"/>
</dbReference>
<dbReference type="SMR" id="P19055"/>
<dbReference type="UniPathway" id="UPA00782"/>
<dbReference type="GO" id="GO:0016163">
    <property type="term" value="F:nitrogenase activity"/>
    <property type="evidence" value="ECO:0007669"/>
    <property type="project" value="InterPro"/>
</dbReference>
<dbReference type="GO" id="GO:0009399">
    <property type="term" value="P:nitrogen fixation"/>
    <property type="evidence" value="ECO:0007669"/>
    <property type="project" value="UniProtKB-KW"/>
</dbReference>
<dbReference type="GO" id="GO:0065003">
    <property type="term" value="P:protein-containing complex assembly"/>
    <property type="evidence" value="ECO:0007669"/>
    <property type="project" value="InterPro"/>
</dbReference>
<dbReference type="Gene3D" id="3.40.50.12380">
    <property type="entry name" value="Nitrogenase MoFe cofactor biosynthesis protein NifE, C-terminal"/>
    <property type="match status" value="1"/>
</dbReference>
<dbReference type="Gene3D" id="3.40.50.1980">
    <property type="entry name" value="Nitrogenase molybdenum iron protein domain"/>
    <property type="match status" value="1"/>
</dbReference>
<dbReference type="InterPro" id="IPR000510">
    <property type="entry name" value="Nase/OxRdtase_comp1"/>
</dbReference>
<dbReference type="InterPro" id="IPR000318">
    <property type="entry name" value="Nase_comp1_CS"/>
</dbReference>
<dbReference type="InterPro" id="IPR005973">
    <property type="entry name" value="NifE"/>
</dbReference>
<dbReference type="InterPro" id="IPR049939">
    <property type="entry name" value="NifE-like"/>
</dbReference>
<dbReference type="NCBIfam" id="TIGR01283">
    <property type="entry name" value="nifE"/>
    <property type="match status" value="1"/>
</dbReference>
<dbReference type="PANTHER" id="PTHR42956">
    <property type="entry name" value="NITROGENASE IRON-MOLYBDENUM COFACTOR BIOSYNTHESIS PROTEIN NIFE"/>
    <property type="match status" value="1"/>
</dbReference>
<dbReference type="PANTHER" id="PTHR42956:SF1">
    <property type="entry name" value="NITROGENASE IRON-MOLYBDENUM COFACTOR BIOSYNTHESIS PROTEIN NIFE"/>
    <property type="match status" value="1"/>
</dbReference>
<dbReference type="Pfam" id="PF00148">
    <property type="entry name" value="Oxidored_nitro"/>
    <property type="match status" value="1"/>
</dbReference>
<dbReference type="SUPFAM" id="SSF53807">
    <property type="entry name" value="Helical backbone' metal receptor"/>
    <property type="match status" value="1"/>
</dbReference>
<dbReference type="PROSITE" id="PS00699">
    <property type="entry name" value="NITROGENASE_1_1"/>
    <property type="match status" value="1"/>
</dbReference>
<dbReference type="PROSITE" id="PS00090">
    <property type="entry name" value="NITROGENASE_1_2"/>
    <property type="match status" value="1"/>
</dbReference>